<proteinExistence type="inferred from homology"/>
<organism>
    <name type="scientific">Alternaria solani</name>
    <dbReference type="NCBI Taxonomy" id="48100"/>
    <lineage>
        <taxon>Eukaryota</taxon>
        <taxon>Fungi</taxon>
        <taxon>Dikarya</taxon>
        <taxon>Ascomycota</taxon>
        <taxon>Pezizomycotina</taxon>
        <taxon>Dothideomycetes</taxon>
        <taxon>Pleosporomycetidae</taxon>
        <taxon>Pleosporales</taxon>
        <taxon>Pleosporineae</taxon>
        <taxon>Pleosporaceae</taxon>
        <taxon>Alternaria</taxon>
        <taxon>Alternaria sect. Porri</taxon>
    </lineage>
</organism>
<protein>
    <recommendedName>
        <fullName evidence="4">Cytochrome P450 monooxygenase alt3</fullName>
        <ecNumber evidence="6">1.-.-.-</ecNumber>
    </recommendedName>
    <alternativeName>
        <fullName evidence="4">Alternapyrone biosynthesis cluster protein 3</fullName>
    </alternativeName>
</protein>
<name>ALT3_ALTSO</name>
<reference key="1">
    <citation type="journal article" date="2005" name="Chem. Biol.">
        <title>An iterative type I polyketide synthase PKSN catalyzes synthesis of the decaketide alternapyrone with regio-specific octa-methylation.</title>
        <authorList>
            <person name="Fujii I."/>
            <person name="Yoshida N."/>
            <person name="Shimomaki S."/>
            <person name="Oikawa H."/>
            <person name="Ebizuka Y."/>
        </authorList>
    </citation>
    <scope>NUCLEOTIDE SEQUENCE [GENOMIC DNA]</scope>
    <scope>FUNCTION</scope>
    <source>
        <strain>584</strain>
    </source>
</reference>
<accession>Q5KTN1</accession>
<comment type="function">
    <text evidence="3">Cytochrome P450 monooxygenase; part of the gene cluster that mediates the biosynthesis of alternapyrone derivatives (PubMed:16356847). Alternapyrone is a decaketide with octa-methylation from methionine on every C2 unit except the third unit (PubMed:16356847). All the domains in the polyketide synthase alt5 are apparently involved in alternapyrone synthesis, that is, the 8 CMeT, 7 KR, 7 DH, and 4 ER reactions in the 9 KS-mediated condensation steps required for alternapyrone synthesis (PubMed:16356847). the alternapyrone produced by alt5 might be intensively modified by cytochrome P450 monooxygenases alt1, alt2 and alt3 and FAD-dependent oxidoreductase alt4 present in the alt gene cluster (PubMed:16356847).</text>
</comment>
<comment type="cofactor">
    <cofactor evidence="1">
        <name>heme</name>
        <dbReference type="ChEBI" id="CHEBI:30413"/>
    </cofactor>
</comment>
<comment type="pathway">
    <text evidence="6">Secondary metabolite biosynthesis.</text>
</comment>
<comment type="subcellular location">
    <subcellularLocation>
        <location evidence="2">Membrane</location>
        <topology evidence="2">Single-pass membrane protein</topology>
    </subcellularLocation>
</comment>
<comment type="similarity">
    <text evidence="5">Belongs to the cytochrome P450 family.</text>
</comment>
<gene>
    <name evidence="4" type="primary">alt3</name>
</gene>
<feature type="chain" id="PRO_0000444926" description="Cytochrome P450 monooxygenase alt3">
    <location>
        <begin position="1"/>
        <end position="509"/>
    </location>
</feature>
<feature type="transmembrane region" description="Helical" evidence="2">
    <location>
        <begin position="25"/>
        <end position="45"/>
    </location>
</feature>
<feature type="binding site" description="axial binding residue" evidence="1">
    <location>
        <position position="450"/>
    </location>
    <ligand>
        <name>heme</name>
        <dbReference type="ChEBI" id="CHEBI:30413"/>
    </ligand>
    <ligandPart>
        <name>Fe</name>
        <dbReference type="ChEBI" id="CHEBI:18248"/>
    </ligandPart>
</feature>
<sequence length="509" mass="57907">MALSSALDSLWHQLDQLLSLINRNIITGIIVLPVLYVLLKVIYNLYLSPLAGYPGPKLWAVSRLPWNRANMKGRISWKIRELHDKYGPVVRIAPDELSYTTSGAWKKIYGQRNPEFVKALDGRGIAPASIGGQRSLMTEHQDKHLRLRRAIDPAFSQRALREQESYFQDHSDNLVQKLKQRCKDGPLDMTTWYNLVAFDIVSDLAFGEPSGCVNNPDQPWIQAILARAKAIVWFQLAVQYGFMGLLNWMTPKYVTESRKKHIAMTEAKLKARVEAKNPGKDFMSYILENDEKLNHLELVMLSSNFIVAGSGTSAGGMSGLTYLLLRNPDKLEKLKQEIRGLFKSRADMTLQAVTSCKYLRACLNEGMRLYPPTPGSLPRFVPGKGEMIEGKWVPGGYAVGVNQLAAGHSERNFKKAREFHPERWLDEPDSEFKDDDRSAVQPFSYGQRGCIGRSMAYAEMSLTMAKLVWYFDWELDEPDNDWWNQQGTYLVWEKLPLQVKLTPVSDVVE</sequence>
<keyword id="KW-0349">Heme</keyword>
<keyword id="KW-0408">Iron</keyword>
<keyword id="KW-0472">Membrane</keyword>
<keyword id="KW-0479">Metal-binding</keyword>
<keyword id="KW-0503">Monooxygenase</keyword>
<keyword id="KW-0560">Oxidoreductase</keyword>
<keyword id="KW-0812">Transmembrane</keyword>
<keyword id="KW-1133">Transmembrane helix</keyword>
<dbReference type="EC" id="1.-.-.-" evidence="6"/>
<dbReference type="EMBL" id="AB120221">
    <property type="protein sequence ID" value="BAD83682.1"/>
    <property type="molecule type" value="Genomic_DNA"/>
</dbReference>
<dbReference type="SMR" id="Q5KTN1"/>
<dbReference type="GO" id="GO:0016020">
    <property type="term" value="C:membrane"/>
    <property type="evidence" value="ECO:0007669"/>
    <property type="project" value="UniProtKB-SubCell"/>
</dbReference>
<dbReference type="GO" id="GO:0020037">
    <property type="term" value="F:heme binding"/>
    <property type="evidence" value="ECO:0007669"/>
    <property type="project" value="InterPro"/>
</dbReference>
<dbReference type="GO" id="GO:0005506">
    <property type="term" value="F:iron ion binding"/>
    <property type="evidence" value="ECO:0007669"/>
    <property type="project" value="InterPro"/>
</dbReference>
<dbReference type="GO" id="GO:0004497">
    <property type="term" value="F:monooxygenase activity"/>
    <property type="evidence" value="ECO:0007669"/>
    <property type="project" value="UniProtKB-KW"/>
</dbReference>
<dbReference type="GO" id="GO:0016705">
    <property type="term" value="F:oxidoreductase activity, acting on paired donors, with incorporation or reduction of molecular oxygen"/>
    <property type="evidence" value="ECO:0007669"/>
    <property type="project" value="InterPro"/>
</dbReference>
<dbReference type="CDD" id="cd11058">
    <property type="entry name" value="CYP60B-like"/>
    <property type="match status" value="1"/>
</dbReference>
<dbReference type="FunFam" id="1.10.630.10:FF:000047">
    <property type="entry name" value="Cytochrome P450 monooxygenase"/>
    <property type="match status" value="1"/>
</dbReference>
<dbReference type="Gene3D" id="1.10.630.10">
    <property type="entry name" value="Cytochrome P450"/>
    <property type="match status" value="1"/>
</dbReference>
<dbReference type="InterPro" id="IPR001128">
    <property type="entry name" value="Cyt_P450"/>
</dbReference>
<dbReference type="InterPro" id="IPR017972">
    <property type="entry name" value="Cyt_P450_CS"/>
</dbReference>
<dbReference type="InterPro" id="IPR002401">
    <property type="entry name" value="Cyt_P450_E_grp-I"/>
</dbReference>
<dbReference type="InterPro" id="IPR036396">
    <property type="entry name" value="Cyt_P450_sf"/>
</dbReference>
<dbReference type="InterPro" id="IPR050121">
    <property type="entry name" value="Cytochrome_P450_monoxygenase"/>
</dbReference>
<dbReference type="PANTHER" id="PTHR24305">
    <property type="entry name" value="CYTOCHROME P450"/>
    <property type="match status" value="1"/>
</dbReference>
<dbReference type="PANTHER" id="PTHR24305:SF230">
    <property type="entry name" value="P450, PUTATIVE (EUROFUNG)-RELATED"/>
    <property type="match status" value="1"/>
</dbReference>
<dbReference type="Pfam" id="PF00067">
    <property type="entry name" value="p450"/>
    <property type="match status" value="1"/>
</dbReference>
<dbReference type="PRINTS" id="PR00463">
    <property type="entry name" value="EP450I"/>
</dbReference>
<dbReference type="PRINTS" id="PR00385">
    <property type="entry name" value="P450"/>
</dbReference>
<dbReference type="SUPFAM" id="SSF48264">
    <property type="entry name" value="Cytochrome P450"/>
    <property type="match status" value="1"/>
</dbReference>
<dbReference type="PROSITE" id="PS00086">
    <property type="entry name" value="CYTOCHROME_P450"/>
    <property type="match status" value="1"/>
</dbReference>
<evidence type="ECO:0000250" key="1">
    <source>
        <dbReference type="UniProtKB" id="P04798"/>
    </source>
</evidence>
<evidence type="ECO:0000255" key="2"/>
<evidence type="ECO:0000269" key="3">
    <source>
    </source>
</evidence>
<evidence type="ECO:0000303" key="4">
    <source>
    </source>
</evidence>
<evidence type="ECO:0000305" key="5"/>
<evidence type="ECO:0000305" key="6">
    <source>
    </source>
</evidence>